<reference key="1">
    <citation type="journal article" date="2006" name="Science">
        <title>Large-scale sequence analysis of avian influenza isolates.</title>
        <authorList>
            <person name="Obenauer J.C."/>
            <person name="Denson J."/>
            <person name="Mehta P.K."/>
            <person name="Su X."/>
            <person name="Mukatira S."/>
            <person name="Finkelstein D.B."/>
            <person name="Xu X."/>
            <person name="Wang J."/>
            <person name="Ma J."/>
            <person name="Fan Y."/>
            <person name="Rakestraw K.M."/>
            <person name="Webster R.G."/>
            <person name="Hoffmann E."/>
            <person name="Krauss S."/>
            <person name="Zheng J."/>
            <person name="Zhang Z."/>
            <person name="Naeve C.W."/>
        </authorList>
    </citation>
    <scope>NUCLEOTIDE SEQUENCE [GENOMIC RNA]</scope>
</reference>
<protein>
    <recommendedName>
        <fullName evidence="1">Protein PB1-F2</fullName>
    </recommendedName>
</protein>
<keyword id="KW-0053">Apoptosis</keyword>
<keyword id="KW-1035">Host cytoplasm</keyword>
<keyword id="KW-1043">Host membrane</keyword>
<keyword id="KW-1045">Host mitochondrion</keyword>
<keyword id="KW-1046">Host mitochondrion inner membrane</keyword>
<keyword id="KW-1048">Host nucleus</keyword>
<keyword id="KW-0945">Host-virus interaction</keyword>
<keyword id="KW-1090">Inhibition of host innate immune response by virus</keyword>
<keyword id="KW-1097">Inhibition of host MAVS by virus</keyword>
<keyword id="KW-1113">Inhibition of host RLR pathway by virus</keyword>
<keyword id="KW-0472">Membrane</keyword>
<keyword id="KW-1119">Modulation of host cell apoptosis by virus</keyword>
<keyword id="KW-0899">Viral immunoevasion</keyword>
<accession>Q0A2G7</accession>
<dbReference type="EMBL" id="CY015087">
    <property type="protein sequence ID" value="ABI85115.1"/>
    <property type="molecule type" value="Genomic_RNA"/>
</dbReference>
<dbReference type="SMR" id="Q0A2G7"/>
<dbReference type="Proteomes" id="UP000169634">
    <property type="component" value="Genome"/>
</dbReference>
<dbReference type="GO" id="GO:0044164">
    <property type="term" value="C:host cell cytosol"/>
    <property type="evidence" value="ECO:0007669"/>
    <property type="project" value="UniProtKB-SubCell"/>
</dbReference>
<dbReference type="GO" id="GO:0044192">
    <property type="term" value="C:host cell mitochondrial inner membrane"/>
    <property type="evidence" value="ECO:0007669"/>
    <property type="project" value="UniProtKB-SubCell"/>
</dbReference>
<dbReference type="GO" id="GO:0042025">
    <property type="term" value="C:host cell nucleus"/>
    <property type="evidence" value="ECO:0007669"/>
    <property type="project" value="UniProtKB-SubCell"/>
</dbReference>
<dbReference type="GO" id="GO:0016020">
    <property type="term" value="C:membrane"/>
    <property type="evidence" value="ECO:0007669"/>
    <property type="project" value="UniProtKB-UniRule"/>
</dbReference>
<dbReference type="GO" id="GO:0052150">
    <property type="term" value="P:symbiont-mediated perturbation of host apoptosis"/>
    <property type="evidence" value="ECO:0007669"/>
    <property type="project" value="UniProtKB-KW"/>
</dbReference>
<dbReference type="GO" id="GO:0039545">
    <property type="term" value="P:symbiont-mediated suppression of host cytoplasmic pattern recognition receptor signaling pathway via inhibition of MAVS activity"/>
    <property type="evidence" value="ECO:0007669"/>
    <property type="project" value="UniProtKB-KW"/>
</dbReference>
<dbReference type="HAMAP" id="MF_04064">
    <property type="entry name" value="INFV_PB1F2"/>
    <property type="match status" value="1"/>
</dbReference>
<dbReference type="InterPro" id="IPR021045">
    <property type="entry name" value="Flu_proapoptotic_PB1-F2"/>
</dbReference>
<dbReference type="Pfam" id="PF11986">
    <property type="entry name" value="PB1-F2"/>
    <property type="match status" value="1"/>
</dbReference>
<name>PB1F2_I59A0</name>
<comment type="function">
    <text evidence="1">Plays an important role in promoting lung pathology in both primary viral infection and secondary bacterial infection. Promotes alteration of mitochondrial morphology, dissipation of mitochondrial membrane potential, and cell death. Alternatively, inhibits the production of interferon in the infected cell at the level of host mitochondrial antiviral signaling MAVS. Its level of expression differs greatly depending on which cell type is infected, in a manner that is independent of the levels of expression of other viral proteins. Monocytic cells are more affected than epithelial cells. Seems to disable virus-infected monocytes or other host innate immune cells. During early stage of infection, predisposes the mitochondria to permeability transition through interaction with host SLC25A6/ANT3 and VDAC1. These proteins participate in the formation of the permeability transition pore complex (PTPC) responsible of the release of mitochondrial products that triggers apoptosis.</text>
</comment>
<comment type="subunit">
    <text evidence="1">Oligomer. Interacts with human SLC25A6/ANT3 and VDAC1. Interacts with host MAVS.</text>
</comment>
<comment type="subcellular location">
    <subcellularLocation>
        <location evidence="1">Host mitochondrion inner membrane</location>
    </subcellularLocation>
    <subcellularLocation>
        <location evidence="1">Host nucleus</location>
    </subcellularLocation>
    <subcellularLocation>
        <location evidence="1">Host cytoplasm</location>
        <location evidence="1">Host cytosol</location>
    </subcellularLocation>
    <text evidence="1">Inner mitochondrial membrane in most cells types. Otherwise is detected in the nucleus and cytosol.</text>
</comment>
<comment type="miscellaneous">
    <text>Is not encoded in all strains, and seems to be dispensable for replication.</text>
</comment>
<comment type="similarity">
    <text evidence="1">Belongs to the influenza viruses PB1-F2 family.</text>
</comment>
<feature type="chain" id="PRO_0000309853" description="Protein PB1-F2">
    <location>
        <begin position="1"/>
        <end position="90"/>
    </location>
</feature>
<feature type="region of interest" description="Disordered" evidence="2">
    <location>
        <begin position="1"/>
        <end position="30"/>
    </location>
</feature>
<feature type="region of interest" description="Mitochondrial targeting sequence" evidence="1">
    <location>
        <begin position="65"/>
        <end position="87"/>
    </location>
</feature>
<feature type="site" description="Low pathogenicity" evidence="1">
    <location>
        <position position="66"/>
    </location>
</feature>
<proteinExistence type="inferred from homology"/>
<organism>
    <name type="scientific">Influenza A virus (strain A/Chicken/Scotland/1959 H5N1)</name>
    <dbReference type="NCBI Taxonomy" id="402527"/>
    <lineage>
        <taxon>Viruses</taxon>
        <taxon>Riboviria</taxon>
        <taxon>Orthornavirae</taxon>
        <taxon>Negarnaviricota</taxon>
        <taxon>Polyploviricotina</taxon>
        <taxon>Insthoviricetes</taxon>
        <taxon>Articulavirales</taxon>
        <taxon>Orthomyxoviridae</taxon>
        <taxon>Alphainfluenzavirus</taxon>
        <taxon>Alphainfluenzavirus influenzae</taxon>
        <taxon>Influenza A virus</taxon>
    </lineage>
</organism>
<evidence type="ECO:0000255" key="1">
    <source>
        <dbReference type="HAMAP-Rule" id="MF_04064"/>
    </source>
</evidence>
<evidence type="ECO:0000256" key="2">
    <source>
        <dbReference type="SAM" id="MobiDB-lite"/>
    </source>
</evidence>
<sequence>MEQEQDTPWTQSTEHINIQKKGNGQQTQKLGRPNLTQLMDHYLRTTNQVDMHKQTASWKQWLSLKNPIQESLKTRALKRWKSFSKQGLTN</sequence>
<gene>
    <name evidence="1" type="primary">PB1</name>
</gene>
<organismHost>
    <name type="scientific">Aves</name>
    <dbReference type="NCBI Taxonomy" id="8782"/>
</organismHost>
<organismHost>
    <name type="scientific">Felis catus</name>
    <name type="common">Cat</name>
    <name type="synonym">Felis silvestris catus</name>
    <dbReference type="NCBI Taxonomy" id="9685"/>
</organismHost>
<organismHost>
    <name type="scientific">Homo sapiens</name>
    <name type="common">Human</name>
    <dbReference type="NCBI Taxonomy" id="9606"/>
</organismHost>
<organismHost>
    <name type="scientific">Panthera pardus</name>
    <name type="common">Leopard</name>
    <name type="synonym">Felis pardus</name>
    <dbReference type="NCBI Taxonomy" id="9691"/>
</organismHost>
<organismHost>
    <name type="scientific">Panthera tigris</name>
    <name type="common">Tiger</name>
    <dbReference type="NCBI Taxonomy" id="9694"/>
</organismHost>
<organismHost>
    <name type="scientific">Sus scrofa</name>
    <name type="common">Pig</name>
    <dbReference type="NCBI Taxonomy" id="9823"/>
</organismHost>